<comment type="function">
    <text evidence="1">Required for normal beta-1,6-glucan synthesis.</text>
</comment>
<comment type="subcellular location">
    <subcellularLocation>
        <location evidence="1">Endoplasmic reticulum membrane</location>
        <topology evidence="1">Single-pass type I membrane protein</topology>
    </subcellularLocation>
</comment>
<comment type="similarity">
    <text evidence="3">Belongs to the BIG1 family.</text>
</comment>
<comment type="sequence caution" evidence="3">
    <conflict type="erroneous gene model prediction">
        <sequence resource="EMBL-CDS" id="CAR56750"/>
    </conflict>
</comment>
<proteinExistence type="inferred from homology"/>
<keyword id="KW-0961">Cell wall biogenesis/degradation</keyword>
<keyword id="KW-0256">Endoplasmic reticulum</keyword>
<keyword id="KW-0325">Glycoprotein</keyword>
<keyword id="KW-0472">Membrane</keyword>
<keyword id="KW-1185">Reference proteome</keyword>
<keyword id="KW-0732">Signal</keyword>
<keyword id="KW-0812">Transmembrane</keyword>
<keyword id="KW-1133">Transmembrane helix</keyword>
<evidence type="ECO:0000250" key="1"/>
<evidence type="ECO:0000255" key="2"/>
<evidence type="ECO:0000305" key="3"/>
<dbReference type="EMBL" id="CR382125">
    <property type="protein sequence ID" value="CAR56750.1"/>
    <property type="status" value="ALT_SEQ"/>
    <property type="molecule type" value="Genomic_DNA"/>
</dbReference>
<dbReference type="RefSeq" id="XP_002999412.1">
    <property type="nucleotide sequence ID" value="XM_002999366.1"/>
</dbReference>
<dbReference type="SMR" id="Q6CMA4"/>
<dbReference type="FunCoup" id="Q6CMA4">
    <property type="interactions" value="29"/>
</dbReference>
<dbReference type="STRING" id="284590.Q6CMA4"/>
<dbReference type="GlyCosmos" id="Q6CMA4">
    <property type="glycosylation" value="1 site, No reported glycans"/>
</dbReference>
<dbReference type="PaxDb" id="284590-Q6CMA4"/>
<dbReference type="KEGG" id="kla:KLLA0_E21737g"/>
<dbReference type="eggNOG" id="ENOG502RXHV">
    <property type="taxonomic scope" value="Eukaryota"/>
</dbReference>
<dbReference type="HOGENOM" id="CLU_067894_0_0_1"/>
<dbReference type="InParanoid" id="Q6CMA4"/>
<dbReference type="OMA" id="PNWNPIR"/>
<dbReference type="Proteomes" id="UP000000598">
    <property type="component" value="Chromosome E"/>
</dbReference>
<dbReference type="GO" id="GO:0005789">
    <property type="term" value="C:endoplasmic reticulum membrane"/>
    <property type="evidence" value="ECO:0007669"/>
    <property type="project" value="UniProtKB-SubCell"/>
</dbReference>
<dbReference type="GO" id="GO:0006078">
    <property type="term" value="P:(1-&gt;6)-beta-D-glucan biosynthetic process"/>
    <property type="evidence" value="ECO:0007669"/>
    <property type="project" value="TreeGrafter"/>
</dbReference>
<dbReference type="GO" id="GO:0071555">
    <property type="term" value="P:cell wall organization"/>
    <property type="evidence" value="ECO:0007669"/>
    <property type="project" value="UniProtKB-KW"/>
</dbReference>
<dbReference type="GO" id="GO:0009272">
    <property type="term" value="P:fungal-type cell wall biogenesis"/>
    <property type="evidence" value="ECO:0007669"/>
    <property type="project" value="TreeGrafter"/>
</dbReference>
<dbReference type="InterPro" id="IPR037654">
    <property type="entry name" value="Big1"/>
</dbReference>
<dbReference type="PANTHER" id="PTHR28285">
    <property type="entry name" value="PROTEIN BIG1"/>
    <property type="match status" value="1"/>
</dbReference>
<dbReference type="PANTHER" id="PTHR28285:SF1">
    <property type="entry name" value="PROTEIN BIG1"/>
    <property type="match status" value="1"/>
</dbReference>
<organism>
    <name type="scientific">Kluyveromyces lactis (strain ATCC 8585 / CBS 2359 / DSM 70799 / NBRC 1267 / NRRL Y-1140 / WM37)</name>
    <name type="common">Yeast</name>
    <name type="synonym">Candida sphaerica</name>
    <dbReference type="NCBI Taxonomy" id="284590"/>
    <lineage>
        <taxon>Eukaryota</taxon>
        <taxon>Fungi</taxon>
        <taxon>Dikarya</taxon>
        <taxon>Ascomycota</taxon>
        <taxon>Saccharomycotina</taxon>
        <taxon>Saccharomycetes</taxon>
        <taxon>Saccharomycetales</taxon>
        <taxon>Saccharomycetaceae</taxon>
        <taxon>Kluyveromyces</taxon>
    </lineage>
</organism>
<name>BIG1_KLULA</name>
<sequence>MQPSFMTMNELIVFALLLTPLLAARQQSVPGLLFSYNLAPGIVKYQDKYDNAQLPQDDFLKVAKDLISQCHSETYVFVNQPGLSRSDFKQHKQSMHKLYNYVLTSSTTVKFEKIDIVQNDDIYEELIAYTMDKCNIDDKIDIGGNVTDRYQPFVEARTRVLRVDFPPLPQQGQYVEGIGTRKDVLQANDEYLRYVMGTLPTPKHTVFYMSLEKSEVPDTETSLSYDIWPEIFTNPQRKVEIDRNDRVAKEMPKLVPYRPRIDTEDDKYLTVLDQEFIDNHYGIIVLIIGVTIAFILLQLGAVKVKKPSKPQITKDVTKEKKTQ</sequence>
<reference key="1">
    <citation type="journal article" date="2004" name="Nature">
        <title>Genome evolution in yeasts.</title>
        <authorList>
            <person name="Dujon B."/>
            <person name="Sherman D."/>
            <person name="Fischer G."/>
            <person name="Durrens P."/>
            <person name="Casaregola S."/>
            <person name="Lafontaine I."/>
            <person name="de Montigny J."/>
            <person name="Marck C."/>
            <person name="Neuveglise C."/>
            <person name="Talla E."/>
            <person name="Goffard N."/>
            <person name="Frangeul L."/>
            <person name="Aigle M."/>
            <person name="Anthouard V."/>
            <person name="Babour A."/>
            <person name="Barbe V."/>
            <person name="Barnay S."/>
            <person name="Blanchin S."/>
            <person name="Beckerich J.-M."/>
            <person name="Beyne E."/>
            <person name="Bleykasten C."/>
            <person name="Boisrame A."/>
            <person name="Boyer J."/>
            <person name="Cattolico L."/>
            <person name="Confanioleri F."/>
            <person name="de Daruvar A."/>
            <person name="Despons L."/>
            <person name="Fabre E."/>
            <person name="Fairhead C."/>
            <person name="Ferry-Dumazet H."/>
            <person name="Groppi A."/>
            <person name="Hantraye F."/>
            <person name="Hennequin C."/>
            <person name="Jauniaux N."/>
            <person name="Joyet P."/>
            <person name="Kachouri R."/>
            <person name="Kerrest A."/>
            <person name="Koszul R."/>
            <person name="Lemaire M."/>
            <person name="Lesur I."/>
            <person name="Ma L."/>
            <person name="Muller H."/>
            <person name="Nicaud J.-M."/>
            <person name="Nikolski M."/>
            <person name="Oztas S."/>
            <person name="Ozier-Kalogeropoulos O."/>
            <person name="Pellenz S."/>
            <person name="Potier S."/>
            <person name="Richard G.-F."/>
            <person name="Straub M.-L."/>
            <person name="Suleau A."/>
            <person name="Swennen D."/>
            <person name="Tekaia F."/>
            <person name="Wesolowski-Louvel M."/>
            <person name="Westhof E."/>
            <person name="Wirth B."/>
            <person name="Zeniou-Meyer M."/>
            <person name="Zivanovic Y."/>
            <person name="Bolotin-Fukuhara M."/>
            <person name="Thierry A."/>
            <person name="Bouchier C."/>
            <person name="Caudron B."/>
            <person name="Scarpelli C."/>
            <person name="Gaillardin C."/>
            <person name="Weissenbach J."/>
            <person name="Wincker P."/>
            <person name="Souciet J.-L."/>
        </authorList>
    </citation>
    <scope>NUCLEOTIDE SEQUENCE [LARGE SCALE GENOMIC DNA]</scope>
    <source>
        <strain>ATCC 8585 / CBS 2359 / DSM 70799 / NBRC 1267 / NRRL Y-1140 / WM37</strain>
    </source>
</reference>
<feature type="signal peptide" evidence="2">
    <location>
        <begin position="1"/>
        <end position="23"/>
    </location>
</feature>
<feature type="chain" id="PRO_0000277852" description="Protein BIG1">
    <location>
        <begin position="24"/>
        <end position="323"/>
    </location>
</feature>
<feature type="topological domain" description="Lumenal" evidence="2">
    <location>
        <begin position="24"/>
        <end position="281"/>
    </location>
</feature>
<feature type="transmembrane region" description="Helical" evidence="2">
    <location>
        <begin position="282"/>
        <end position="302"/>
    </location>
</feature>
<feature type="topological domain" description="Cytoplasmic" evidence="2">
    <location>
        <begin position="303"/>
        <end position="323"/>
    </location>
</feature>
<feature type="glycosylation site" description="N-linked (GlcNAc...) asparagine" evidence="2">
    <location>
        <position position="145"/>
    </location>
</feature>
<gene>
    <name type="primary">BIG1</name>
    <name type="ordered locus">KLLA0E21737g</name>
    <name type="ordered locus">KLLA0E21835g</name>
</gene>
<protein>
    <recommendedName>
        <fullName>Protein BIG1</fullName>
    </recommendedName>
</protein>
<accession>Q6CMA4</accession>
<accession>B4UN79</accession>